<comment type="function">
    <text evidence="1">Negatively regulates transcription of bacterial ribonucleotide reductase nrd genes and operons by binding to NrdR-boxes.</text>
</comment>
<comment type="cofactor">
    <cofactor evidence="1">
        <name>Zn(2+)</name>
        <dbReference type="ChEBI" id="CHEBI:29105"/>
    </cofactor>
    <text evidence="1">Binds 1 zinc ion.</text>
</comment>
<comment type="similarity">
    <text evidence="1">Belongs to the NrdR family.</text>
</comment>
<accession>A6U2F3</accession>
<organism>
    <name type="scientific">Staphylococcus aureus (strain JH1)</name>
    <dbReference type="NCBI Taxonomy" id="359787"/>
    <lineage>
        <taxon>Bacteria</taxon>
        <taxon>Bacillati</taxon>
        <taxon>Bacillota</taxon>
        <taxon>Bacilli</taxon>
        <taxon>Bacillales</taxon>
        <taxon>Staphylococcaceae</taxon>
        <taxon>Staphylococcus</taxon>
    </lineage>
</organism>
<protein>
    <recommendedName>
        <fullName evidence="1">Transcriptional repressor NrdR</fullName>
    </recommendedName>
</protein>
<gene>
    <name evidence="1" type="primary">nrdR</name>
    <name type="ordered locus">SaurJH1_1777</name>
</gene>
<name>NRDR_STAA2</name>
<sequence length="156" mass="18204">MKCPKCNSTQSKVVDSRHADELNAIRRRRECENCGTRFTTFEHIEVSQLIVVKKDGTREQFSREKILNGLVRSCEKRPVRYQQLEDITNKVEWQLRDEGHTEVSSRDIGEHVMNLLMHVDQVSYVRFASVYKEFKDVDQLLASMQGILSENKRSDA</sequence>
<evidence type="ECO:0000255" key="1">
    <source>
        <dbReference type="HAMAP-Rule" id="MF_00440"/>
    </source>
</evidence>
<proteinExistence type="inferred from homology"/>
<dbReference type="EMBL" id="CP000736">
    <property type="protein sequence ID" value="ABR52621.1"/>
    <property type="molecule type" value="Genomic_DNA"/>
</dbReference>
<dbReference type="SMR" id="A6U2F3"/>
<dbReference type="KEGG" id="sah:SaurJH1_1777"/>
<dbReference type="HOGENOM" id="CLU_108412_0_0_9"/>
<dbReference type="GO" id="GO:0005524">
    <property type="term" value="F:ATP binding"/>
    <property type="evidence" value="ECO:0007669"/>
    <property type="project" value="UniProtKB-KW"/>
</dbReference>
<dbReference type="GO" id="GO:0003677">
    <property type="term" value="F:DNA binding"/>
    <property type="evidence" value="ECO:0007669"/>
    <property type="project" value="UniProtKB-KW"/>
</dbReference>
<dbReference type="GO" id="GO:0008270">
    <property type="term" value="F:zinc ion binding"/>
    <property type="evidence" value="ECO:0007669"/>
    <property type="project" value="UniProtKB-UniRule"/>
</dbReference>
<dbReference type="GO" id="GO:0045892">
    <property type="term" value="P:negative regulation of DNA-templated transcription"/>
    <property type="evidence" value="ECO:0007669"/>
    <property type="project" value="UniProtKB-UniRule"/>
</dbReference>
<dbReference type="HAMAP" id="MF_00440">
    <property type="entry name" value="NrdR"/>
    <property type="match status" value="1"/>
</dbReference>
<dbReference type="InterPro" id="IPR005144">
    <property type="entry name" value="ATP-cone_dom"/>
</dbReference>
<dbReference type="InterPro" id="IPR055173">
    <property type="entry name" value="NrdR-like_N"/>
</dbReference>
<dbReference type="InterPro" id="IPR003796">
    <property type="entry name" value="RNR_NrdR-like"/>
</dbReference>
<dbReference type="NCBIfam" id="TIGR00244">
    <property type="entry name" value="transcriptional regulator NrdR"/>
    <property type="match status" value="1"/>
</dbReference>
<dbReference type="PANTHER" id="PTHR30455">
    <property type="entry name" value="TRANSCRIPTIONAL REPRESSOR NRDR"/>
    <property type="match status" value="1"/>
</dbReference>
<dbReference type="PANTHER" id="PTHR30455:SF2">
    <property type="entry name" value="TRANSCRIPTIONAL REPRESSOR NRDR"/>
    <property type="match status" value="1"/>
</dbReference>
<dbReference type="Pfam" id="PF03477">
    <property type="entry name" value="ATP-cone"/>
    <property type="match status" value="1"/>
</dbReference>
<dbReference type="Pfam" id="PF22811">
    <property type="entry name" value="Zn_ribbon_NrdR"/>
    <property type="match status" value="1"/>
</dbReference>
<dbReference type="PROSITE" id="PS51161">
    <property type="entry name" value="ATP_CONE"/>
    <property type="match status" value="1"/>
</dbReference>
<feature type="chain" id="PRO_1000080838" description="Transcriptional repressor NrdR">
    <location>
        <begin position="1"/>
        <end position="156"/>
    </location>
</feature>
<feature type="domain" description="ATP-cone" evidence="1">
    <location>
        <begin position="49"/>
        <end position="139"/>
    </location>
</feature>
<feature type="zinc finger region" evidence="1">
    <location>
        <begin position="3"/>
        <end position="34"/>
    </location>
</feature>
<reference key="1">
    <citation type="submission" date="2007-06" db="EMBL/GenBank/DDBJ databases">
        <title>Complete sequence of chromosome of Staphylococcus aureus subsp. aureus JH1.</title>
        <authorList>
            <consortium name="US DOE Joint Genome Institute"/>
            <person name="Copeland A."/>
            <person name="Lucas S."/>
            <person name="Lapidus A."/>
            <person name="Barry K."/>
            <person name="Detter J.C."/>
            <person name="Glavina del Rio T."/>
            <person name="Hammon N."/>
            <person name="Israni S."/>
            <person name="Dalin E."/>
            <person name="Tice H."/>
            <person name="Pitluck S."/>
            <person name="Chain P."/>
            <person name="Malfatti S."/>
            <person name="Shin M."/>
            <person name="Vergez L."/>
            <person name="Schmutz J."/>
            <person name="Larimer F."/>
            <person name="Land M."/>
            <person name="Hauser L."/>
            <person name="Kyrpides N."/>
            <person name="Ivanova N."/>
            <person name="Tomasz A."/>
            <person name="Richardson P."/>
        </authorList>
    </citation>
    <scope>NUCLEOTIDE SEQUENCE [LARGE SCALE GENOMIC DNA]</scope>
    <source>
        <strain>JH1</strain>
    </source>
</reference>
<keyword id="KW-0067">ATP-binding</keyword>
<keyword id="KW-0238">DNA-binding</keyword>
<keyword id="KW-0479">Metal-binding</keyword>
<keyword id="KW-0547">Nucleotide-binding</keyword>
<keyword id="KW-0678">Repressor</keyword>
<keyword id="KW-0804">Transcription</keyword>
<keyword id="KW-0805">Transcription regulation</keyword>
<keyword id="KW-0862">Zinc</keyword>
<keyword id="KW-0863">Zinc-finger</keyword>